<comment type="function">
    <text evidence="1">Required to maintain the full capacity of the mycobacteria to respond to oxidative stress via the degradation of the oxidation-induced damaged nucleotides. It hydrolyzes all canonical (d)NTPs, as well as the mutagenic dUTP and 8-oxo-7,8-dihydro-2'-deoxyguanosine 5'-triphosphate (8-oxo-dGTP). Also involved in the transcriptional activation of RelA in response to oxidative stress.</text>
</comment>
<comment type="catalytic activity">
    <reaction evidence="1">
        <text>ATP + H2O = AMP + diphosphate + H(+)</text>
        <dbReference type="Rhea" id="RHEA:14245"/>
        <dbReference type="ChEBI" id="CHEBI:15377"/>
        <dbReference type="ChEBI" id="CHEBI:15378"/>
        <dbReference type="ChEBI" id="CHEBI:30616"/>
        <dbReference type="ChEBI" id="CHEBI:33019"/>
        <dbReference type="ChEBI" id="CHEBI:456215"/>
        <dbReference type="EC" id="3.6.1.8"/>
    </reaction>
</comment>
<comment type="cofactor">
    <cofactor>
        <name>Mg(2+)</name>
        <dbReference type="ChEBI" id="CHEBI:18420"/>
    </cofactor>
</comment>
<comment type="biophysicochemical properties">
    <kinetics>
        <KM evidence="1">0.16 mM for 8-oxo-dGTP (at pH 9.6 and at 37 degrees Celsius in the presence of 5 mM magnesium)</KM>
        <KM evidence="1">0.9 mM for GTP (at pH 9.6 and at 37 degrees Celsius in the presence of 5 mM magnesium)</KM>
        <Vmax evidence="1">0.16 nmol/min/ug enzyme for 8-oxo-dGTP (at pH 9.6 and at 37 degrees Celsius in the presence of 5 mM magnesium)</Vmax>
        <Vmax evidence="1">3.1 nmol/min/ug enzyme for GTP (at pH 9.6 and at 37 degrees Celsius in the presence of 5 mM magnesium)</Vmax>
    </kinetics>
</comment>
<comment type="subunit">
    <text>Homotetramer.</text>
</comment>
<comment type="induction">
    <text evidence="1">By oxidative stress.</text>
</comment>
<comment type="disruption phenotype">
    <text evidence="1">Cells lacking this gene show are defective in response to oxidative stress. Complementation with mazG restores resistance to oxidative stress.</text>
</comment>
<comment type="similarity">
    <text evidence="2">Belongs to the nucleoside triphosphate pyrophosphohydrolase family.</text>
</comment>
<name>MAZG_MYCS2</name>
<keyword id="KW-0067">ATP-binding</keyword>
<keyword id="KW-0378">Hydrolase</keyword>
<keyword id="KW-0460">Magnesium</keyword>
<keyword id="KW-0479">Metal-binding</keyword>
<keyword id="KW-0547">Nucleotide-binding</keyword>
<keyword id="KW-1185">Reference proteome</keyword>
<proteinExistence type="evidence at protein level"/>
<accession>A0R3C4</accession>
<accession>I7GE40</accession>
<organism>
    <name type="scientific">Mycolicibacterium smegmatis (strain ATCC 700084 / mc(2)155)</name>
    <name type="common">Mycobacterium smegmatis</name>
    <dbReference type="NCBI Taxonomy" id="246196"/>
    <lineage>
        <taxon>Bacteria</taxon>
        <taxon>Bacillati</taxon>
        <taxon>Actinomycetota</taxon>
        <taxon>Actinomycetes</taxon>
        <taxon>Mycobacteriales</taxon>
        <taxon>Mycobacteriaceae</taxon>
        <taxon>Mycolicibacterium</taxon>
    </lineage>
</organism>
<dbReference type="EC" id="3.6.1.8"/>
<dbReference type="EMBL" id="CP000480">
    <property type="protein sequence ID" value="ABK75736.1"/>
    <property type="molecule type" value="Genomic_DNA"/>
</dbReference>
<dbReference type="EMBL" id="CP001663">
    <property type="protein sequence ID" value="AFP41716.1"/>
    <property type="molecule type" value="Genomic_DNA"/>
</dbReference>
<dbReference type="RefSeq" id="WP_011730524.1">
    <property type="nucleotide sequence ID" value="NZ_SIJM01000006.1"/>
</dbReference>
<dbReference type="RefSeq" id="YP_889662.1">
    <property type="nucleotide sequence ID" value="NC_008596.1"/>
</dbReference>
<dbReference type="SMR" id="A0R3C4"/>
<dbReference type="STRING" id="246196.MSMEG_5422"/>
<dbReference type="PaxDb" id="246196-MSMEI_5273"/>
<dbReference type="KEGG" id="msb:LJ00_26795"/>
<dbReference type="KEGG" id="msg:MSMEI_5273"/>
<dbReference type="KEGG" id="msm:MSMEG_5422"/>
<dbReference type="PATRIC" id="fig|246196.19.peg.5284"/>
<dbReference type="eggNOG" id="COG3956">
    <property type="taxonomic scope" value="Bacteria"/>
</dbReference>
<dbReference type="OrthoDB" id="9808939at2"/>
<dbReference type="SABIO-RK" id="A0R3C4"/>
<dbReference type="Proteomes" id="UP000000757">
    <property type="component" value="Chromosome"/>
</dbReference>
<dbReference type="Proteomes" id="UP000006158">
    <property type="component" value="Chromosome"/>
</dbReference>
<dbReference type="GO" id="GO:0005524">
    <property type="term" value="F:ATP binding"/>
    <property type="evidence" value="ECO:0007669"/>
    <property type="project" value="UniProtKB-KW"/>
</dbReference>
<dbReference type="GO" id="GO:0047693">
    <property type="term" value="F:ATP diphosphatase activity"/>
    <property type="evidence" value="ECO:0007669"/>
    <property type="project" value="UniProtKB-EC"/>
</dbReference>
<dbReference type="GO" id="GO:0046872">
    <property type="term" value="F:metal ion binding"/>
    <property type="evidence" value="ECO:0007669"/>
    <property type="project" value="UniProtKB-KW"/>
</dbReference>
<dbReference type="GO" id="GO:0046061">
    <property type="term" value="P:dATP catabolic process"/>
    <property type="evidence" value="ECO:0007669"/>
    <property type="project" value="TreeGrafter"/>
</dbReference>
<dbReference type="GO" id="GO:0006203">
    <property type="term" value="P:dGTP catabolic process"/>
    <property type="evidence" value="ECO:0007669"/>
    <property type="project" value="TreeGrafter"/>
</dbReference>
<dbReference type="GO" id="GO:0046076">
    <property type="term" value="P:dTTP catabolic process"/>
    <property type="evidence" value="ECO:0007669"/>
    <property type="project" value="TreeGrafter"/>
</dbReference>
<dbReference type="GO" id="GO:0046081">
    <property type="term" value="P:dUTP catabolic process"/>
    <property type="evidence" value="ECO:0007669"/>
    <property type="project" value="TreeGrafter"/>
</dbReference>
<dbReference type="GO" id="GO:0046047">
    <property type="term" value="P:TTP catabolic process"/>
    <property type="evidence" value="ECO:0007669"/>
    <property type="project" value="TreeGrafter"/>
</dbReference>
<dbReference type="GO" id="GO:0046052">
    <property type="term" value="P:UTP catabolic process"/>
    <property type="evidence" value="ECO:0007669"/>
    <property type="project" value="TreeGrafter"/>
</dbReference>
<dbReference type="CDD" id="cd11528">
    <property type="entry name" value="NTP-PPase_MazG_Nterm"/>
    <property type="match status" value="1"/>
</dbReference>
<dbReference type="Gene3D" id="1.10.287.1080">
    <property type="entry name" value="MazG-like"/>
    <property type="match status" value="1"/>
</dbReference>
<dbReference type="InterPro" id="IPR004518">
    <property type="entry name" value="MazG-like_dom"/>
</dbReference>
<dbReference type="InterPro" id="IPR048015">
    <property type="entry name" value="NTP-PPase_MazG-like_N"/>
</dbReference>
<dbReference type="InterPro" id="IPR011551">
    <property type="entry name" value="NTP_PyrPHydrolase_MazG"/>
</dbReference>
<dbReference type="NCBIfam" id="NF008987">
    <property type="entry name" value="PRK12334.1-1"/>
    <property type="match status" value="1"/>
</dbReference>
<dbReference type="PANTHER" id="PTHR30522">
    <property type="entry name" value="NUCLEOSIDE TRIPHOSPHATE PYROPHOSPHOHYDROLASE"/>
    <property type="match status" value="1"/>
</dbReference>
<dbReference type="PANTHER" id="PTHR30522:SF0">
    <property type="entry name" value="NUCLEOSIDE TRIPHOSPHATE PYROPHOSPHOHYDROLASE"/>
    <property type="match status" value="1"/>
</dbReference>
<dbReference type="Pfam" id="PF03819">
    <property type="entry name" value="MazG"/>
    <property type="match status" value="1"/>
</dbReference>
<dbReference type="SUPFAM" id="SSF101386">
    <property type="entry name" value="all-alpha NTP pyrophosphatases"/>
    <property type="match status" value="1"/>
</dbReference>
<evidence type="ECO:0000269" key="1">
    <source>
    </source>
</evidence>
<evidence type="ECO:0000305" key="2"/>
<gene>
    <name type="primary">mazG</name>
    <name type="ordered locus">MSMEG_5422</name>
    <name type="ordered locus">MSMEI_5273</name>
</gene>
<sequence>MIVVLVDPRRPALVPVDAVEFLTGDVQYTEEMPVKVPWSLPSARPAYDGEDAPVLLSSDPEHPVVKARLAAGDRLIAAPEPQPGERLVDAVALMDKLRTSGPWESEQTHDSLRRYLLEETYELFDAVRSGNADELREELGDVLLQVLFHARIAEDAPHHPFSIDDVADALVRKLGNRVPAVLAGESISLDEQLAQWEERKAQEKKVKARASSMDDVPTGQPALALAQKVLARVSQAGLPAELIPASLTSVSVSADTDSENELRTAVLEFMDTVREVEAAVAAGRRGEDVPEELDVAPLGVISEDEWRAYWPGAESSASEAEPEE</sequence>
<protein>
    <recommendedName>
        <fullName>Nucleoside triphosphate pyrophosphohydrolase</fullName>
        <shortName>NTP-PPase</shortName>
        <ecNumber>3.6.1.8</ecNumber>
    </recommendedName>
</protein>
<reference key="1">
    <citation type="submission" date="2006-10" db="EMBL/GenBank/DDBJ databases">
        <authorList>
            <person name="Fleischmann R.D."/>
            <person name="Dodson R.J."/>
            <person name="Haft D.H."/>
            <person name="Merkel J.S."/>
            <person name="Nelson W.C."/>
            <person name="Fraser C.M."/>
        </authorList>
    </citation>
    <scope>NUCLEOTIDE SEQUENCE [LARGE SCALE GENOMIC DNA]</scope>
    <source>
        <strain>ATCC 700084 / mc(2)155</strain>
    </source>
</reference>
<reference key="2">
    <citation type="journal article" date="2007" name="Genome Biol.">
        <title>Interrupted coding sequences in Mycobacterium smegmatis: authentic mutations or sequencing errors?</title>
        <authorList>
            <person name="Deshayes C."/>
            <person name="Perrodou E."/>
            <person name="Gallien S."/>
            <person name="Euphrasie D."/>
            <person name="Schaeffer C."/>
            <person name="Van-Dorsselaer A."/>
            <person name="Poch O."/>
            <person name="Lecompte O."/>
            <person name="Reyrat J.-M."/>
        </authorList>
    </citation>
    <scope>NUCLEOTIDE SEQUENCE [LARGE SCALE GENOMIC DNA]</scope>
    <source>
        <strain>ATCC 700084 / mc(2)155</strain>
    </source>
</reference>
<reference key="3">
    <citation type="journal article" date="2009" name="Genome Res.">
        <title>Ortho-proteogenomics: multiple proteomes investigation through orthology and a new MS-based protocol.</title>
        <authorList>
            <person name="Gallien S."/>
            <person name="Perrodou E."/>
            <person name="Carapito C."/>
            <person name="Deshayes C."/>
            <person name="Reyrat J.-M."/>
            <person name="Van Dorsselaer A."/>
            <person name="Poch O."/>
            <person name="Schaeffer C."/>
            <person name="Lecompte O."/>
        </authorList>
    </citation>
    <scope>NUCLEOTIDE SEQUENCE [LARGE SCALE GENOMIC DNA]</scope>
    <source>
        <strain>ATCC 700084 / mc(2)155</strain>
    </source>
</reference>
<reference key="4">
    <citation type="journal article" date="2010" name="J. Biol. Chem.">
        <title>Mycobacterial MazG is a novel NTP pyrophosphohydrolase involved in oxidative stress response.</title>
        <authorList>
            <person name="Lu L.D."/>
            <person name="Sun Q."/>
            <person name="Fan X.Y."/>
            <person name="Zhong Y."/>
            <person name="Yao Y.F."/>
            <person name="Zhao G.P."/>
        </authorList>
    </citation>
    <scope>FUNCTION IN RESPONSE TO OXIDATIVE STRESS</scope>
    <scope>CATALYTIC ACTIVITY</scope>
    <scope>MUTAGENESIS OF ALA-222</scope>
    <scope>DISRUPTION PHENOTYPE</scope>
    <scope>INDUCTION</scope>
    <scope>BIOPHYSICOCHEMICAL PROPERTIES</scope>
</reference>
<feature type="chain" id="PRO_0000401207" description="Nucleoside triphosphate pyrophosphohydrolase">
    <location>
        <begin position="1"/>
        <end position="324"/>
    </location>
</feature>
<feature type="mutagenesis site" description="Pyrophosphohydrolase activity is reduced 30-fold." evidence="1">
    <original>A</original>
    <variation>E</variation>
    <location>
        <position position="222"/>
    </location>
</feature>